<accession>B1L9B6</accession>
<comment type="function">
    <text evidence="1">Regulates arginine biosynthesis genes.</text>
</comment>
<comment type="pathway">
    <text>Amino-acid biosynthesis; L-arginine biosynthesis [regulation].</text>
</comment>
<comment type="subcellular location">
    <subcellularLocation>
        <location evidence="1">Cytoplasm</location>
    </subcellularLocation>
</comment>
<comment type="similarity">
    <text evidence="1">Belongs to the ArgR family.</text>
</comment>
<proteinExistence type="inferred from homology"/>
<keyword id="KW-0028">Amino-acid biosynthesis</keyword>
<keyword id="KW-0055">Arginine biosynthesis</keyword>
<keyword id="KW-0963">Cytoplasm</keyword>
<keyword id="KW-0238">DNA-binding</keyword>
<keyword id="KW-0678">Repressor</keyword>
<keyword id="KW-0804">Transcription</keyword>
<keyword id="KW-0805">Transcription regulation</keyword>
<organism>
    <name type="scientific">Thermotoga sp. (strain RQ2)</name>
    <dbReference type="NCBI Taxonomy" id="126740"/>
    <lineage>
        <taxon>Bacteria</taxon>
        <taxon>Thermotogati</taxon>
        <taxon>Thermotogota</taxon>
        <taxon>Thermotogae</taxon>
        <taxon>Thermotogales</taxon>
        <taxon>Thermotogaceae</taxon>
        <taxon>Thermotoga</taxon>
    </lineage>
</organism>
<name>ARGR_THESQ</name>
<reference key="1">
    <citation type="journal article" date="2011" name="J. Bacteriol.">
        <title>Genome sequence of Thermotoga sp. strain RQ2, a hyperthermophilic bacterium isolated from a geothermally heated region of the seafloor near Ribeira Quente, the Azores.</title>
        <authorList>
            <person name="Swithers K.S."/>
            <person name="DiPippo J.L."/>
            <person name="Bruce D.C."/>
            <person name="Detter C."/>
            <person name="Tapia R."/>
            <person name="Han S."/>
            <person name="Saunders E."/>
            <person name="Goodwin L.A."/>
            <person name="Han J."/>
            <person name="Woyke T."/>
            <person name="Pitluck S."/>
            <person name="Pennacchio L."/>
            <person name="Nolan M."/>
            <person name="Mikhailova N."/>
            <person name="Lykidis A."/>
            <person name="Land M.L."/>
            <person name="Brettin T."/>
            <person name="Stetter K.O."/>
            <person name="Nelson K.E."/>
            <person name="Gogarten J.P."/>
            <person name="Noll K.M."/>
        </authorList>
    </citation>
    <scope>NUCLEOTIDE SEQUENCE [LARGE SCALE GENOMIC DNA]</scope>
    <source>
        <strain>RQ2</strain>
    </source>
</reference>
<dbReference type="EMBL" id="CP000969">
    <property type="protein sequence ID" value="ACB08914.1"/>
    <property type="molecule type" value="Genomic_DNA"/>
</dbReference>
<dbReference type="RefSeq" id="WP_004083185.1">
    <property type="nucleotide sequence ID" value="NC_010483.1"/>
</dbReference>
<dbReference type="SMR" id="B1L9B6"/>
<dbReference type="KEGG" id="trq:TRQ2_0560"/>
<dbReference type="HOGENOM" id="CLU_097103_0_0_0"/>
<dbReference type="UniPathway" id="UPA00068"/>
<dbReference type="Proteomes" id="UP000001687">
    <property type="component" value="Chromosome"/>
</dbReference>
<dbReference type="GO" id="GO:0005737">
    <property type="term" value="C:cytoplasm"/>
    <property type="evidence" value="ECO:0007669"/>
    <property type="project" value="UniProtKB-SubCell"/>
</dbReference>
<dbReference type="GO" id="GO:0034618">
    <property type="term" value="F:arginine binding"/>
    <property type="evidence" value="ECO:0007669"/>
    <property type="project" value="InterPro"/>
</dbReference>
<dbReference type="GO" id="GO:0003677">
    <property type="term" value="F:DNA binding"/>
    <property type="evidence" value="ECO:0007669"/>
    <property type="project" value="UniProtKB-KW"/>
</dbReference>
<dbReference type="GO" id="GO:0003700">
    <property type="term" value="F:DNA-binding transcription factor activity"/>
    <property type="evidence" value="ECO:0007669"/>
    <property type="project" value="UniProtKB-UniRule"/>
</dbReference>
<dbReference type="GO" id="GO:0006526">
    <property type="term" value="P:L-arginine biosynthetic process"/>
    <property type="evidence" value="ECO:0007669"/>
    <property type="project" value="UniProtKB-UniPathway"/>
</dbReference>
<dbReference type="GO" id="GO:0051259">
    <property type="term" value="P:protein complex oligomerization"/>
    <property type="evidence" value="ECO:0007669"/>
    <property type="project" value="InterPro"/>
</dbReference>
<dbReference type="GO" id="GO:1900079">
    <property type="term" value="P:regulation of arginine biosynthetic process"/>
    <property type="evidence" value="ECO:0007669"/>
    <property type="project" value="UniProtKB-UniRule"/>
</dbReference>
<dbReference type="Gene3D" id="3.30.1360.40">
    <property type="match status" value="1"/>
</dbReference>
<dbReference type="Gene3D" id="1.10.10.10">
    <property type="entry name" value="Winged helix-like DNA-binding domain superfamily/Winged helix DNA-binding domain"/>
    <property type="match status" value="1"/>
</dbReference>
<dbReference type="HAMAP" id="MF_00173">
    <property type="entry name" value="Arg_repressor"/>
    <property type="match status" value="1"/>
</dbReference>
<dbReference type="InterPro" id="IPR001669">
    <property type="entry name" value="Arg_repress"/>
</dbReference>
<dbReference type="InterPro" id="IPR020899">
    <property type="entry name" value="Arg_repress_C"/>
</dbReference>
<dbReference type="InterPro" id="IPR036251">
    <property type="entry name" value="Arg_repress_C_sf"/>
</dbReference>
<dbReference type="InterPro" id="IPR020900">
    <property type="entry name" value="Arg_repress_DNA-bd"/>
</dbReference>
<dbReference type="InterPro" id="IPR036388">
    <property type="entry name" value="WH-like_DNA-bd_sf"/>
</dbReference>
<dbReference type="InterPro" id="IPR036390">
    <property type="entry name" value="WH_DNA-bd_sf"/>
</dbReference>
<dbReference type="NCBIfam" id="TIGR01529">
    <property type="entry name" value="argR_whole"/>
    <property type="match status" value="1"/>
</dbReference>
<dbReference type="PANTHER" id="PTHR34471">
    <property type="entry name" value="ARGININE REPRESSOR"/>
    <property type="match status" value="1"/>
</dbReference>
<dbReference type="PANTHER" id="PTHR34471:SF1">
    <property type="entry name" value="ARGININE REPRESSOR"/>
    <property type="match status" value="1"/>
</dbReference>
<dbReference type="Pfam" id="PF01316">
    <property type="entry name" value="Arg_repressor"/>
    <property type="match status" value="1"/>
</dbReference>
<dbReference type="Pfam" id="PF02863">
    <property type="entry name" value="Arg_repressor_C"/>
    <property type="match status" value="1"/>
</dbReference>
<dbReference type="PRINTS" id="PR01467">
    <property type="entry name" value="ARGREPRESSOR"/>
</dbReference>
<dbReference type="SUPFAM" id="SSF55252">
    <property type="entry name" value="C-terminal domain of arginine repressor"/>
    <property type="match status" value="1"/>
</dbReference>
<dbReference type="SUPFAM" id="SSF46785">
    <property type="entry name" value="Winged helix' DNA-binding domain"/>
    <property type="match status" value="1"/>
</dbReference>
<feature type="chain" id="PRO_1000097894" description="Arginine repressor">
    <location>
        <begin position="1"/>
        <end position="152"/>
    </location>
</feature>
<evidence type="ECO:0000255" key="1">
    <source>
        <dbReference type="HAMAP-Rule" id="MF_00173"/>
    </source>
</evidence>
<protein>
    <recommendedName>
        <fullName evidence="1">Arginine repressor</fullName>
    </recommendedName>
</protein>
<gene>
    <name evidence="1" type="primary">argR</name>
    <name type="ordered locus">TRQ2_0560</name>
</gene>
<sequence>MKISKKRRQELIRKIIHEKKISNQFQIVEELKKYGIKAVQPTVARDLKEIGAVKIMDESGNYVYKLLDETPVIDPWKELKRNFKSFVESIDRAGNLIVIKTIPGTASGIARVIDRLDIDEIVGTLAGDDTIFVAVRDPESCEKIVEKLSSIL</sequence>